<gene>
    <name evidence="1" type="primary">thiM</name>
    <name type="ordered locus">SAG0841</name>
</gene>
<reference key="1">
    <citation type="journal article" date="2002" name="Proc. Natl. Acad. Sci. U.S.A.">
        <title>Complete genome sequence and comparative genomic analysis of an emerging human pathogen, serotype V Streptococcus agalactiae.</title>
        <authorList>
            <person name="Tettelin H."/>
            <person name="Masignani V."/>
            <person name="Cieslewicz M.J."/>
            <person name="Eisen J.A."/>
            <person name="Peterson S.N."/>
            <person name="Wessels M.R."/>
            <person name="Paulsen I.T."/>
            <person name="Nelson K.E."/>
            <person name="Margarit I."/>
            <person name="Read T.D."/>
            <person name="Madoff L.C."/>
            <person name="Wolf A.M."/>
            <person name="Beanan M.J."/>
            <person name="Brinkac L.M."/>
            <person name="Daugherty S.C."/>
            <person name="DeBoy R.T."/>
            <person name="Durkin A.S."/>
            <person name="Kolonay J.F."/>
            <person name="Madupu R."/>
            <person name="Lewis M.R."/>
            <person name="Radune D."/>
            <person name="Fedorova N.B."/>
            <person name="Scanlan D."/>
            <person name="Khouri H.M."/>
            <person name="Mulligan S."/>
            <person name="Carty H.A."/>
            <person name="Cline R.T."/>
            <person name="Van Aken S.E."/>
            <person name="Gill J."/>
            <person name="Scarselli M."/>
            <person name="Mora M."/>
            <person name="Iacobini E.T."/>
            <person name="Brettoni C."/>
            <person name="Galli G."/>
            <person name="Mariani M."/>
            <person name="Vegni F."/>
            <person name="Maione D."/>
            <person name="Rinaudo D."/>
            <person name="Rappuoli R."/>
            <person name="Telford J.L."/>
            <person name="Kasper D.L."/>
            <person name="Grandi G."/>
            <person name="Fraser C.M."/>
        </authorList>
    </citation>
    <scope>NUCLEOTIDE SEQUENCE [LARGE SCALE GENOMIC DNA]</scope>
    <source>
        <strain>ATCC BAA-611 / 2603 V/R</strain>
    </source>
</reference>
<protein>
    <recommendedName>
        <fullName evidence="1">Hydroxyethylthiazole kinase</fullName>
        <ecNumber evidence="1">2.7.1.50</ecNumber>
    </recommendedName>
    <alternativeName>
        <fullName evidence="1">4-methyl-5-beta-hydroxyethylthiazole kinase</fullName>
        <shortName evidence="1">TH kinase</shortName>
        <shortName evidence="1">Thz kinase</shortName>
    </alternativeName>
</protein>
<dbReference type="EC" id="2.7.1.50" evidence="1"/>
<dbReference type="EMBL" id="AE009948">
    <property type="protein sequence ID" value="AAM99728.1"/>
    <property type="molecule type" value="Genomic_DNA"/>
</dbReference>
<dbReference type="RefSeq" id="NP_687856.1">
    <property type="nucleotide sequence ID" value="NC_004116.1"/>
</dbReference>
<dbReference type="RefSeq" id="WP_000280422.1">
    <property type="nucleotide sequence ID" value="NC_004116.1"/>
</dbReference>
<dbReference type="SMR" id="Q8E093"/>
<dbReference type="STRING" id="208435.SAG0841"/>
<dbReference type="KEGG" id="sag:SAG0841"/>
<dbReference type="PATRIC" id="fig|208435.3.peg.847"/>
<dbReference type="HOGENOM" id="CLU_019943_0_2_9"/>
<dbReference type="OrthoDB" id="9778146at2"/>
<dbReference type="UniPathway" id="UPA00060">
    <property type="reaction ID" value="UER00139"/>
</dbReference>
<dbReference type="Proteomes" id="UP000000821">
    <property type="component" value="Chromosome"/>
</dbReference>
<dbReference type="GO" id="GO:0005524">
    <property type="term" value="F:ATP binding"/>
    <property type="evidence" value="ECO:0007669"/>
    <property type="project" value="UniProtKB-UniRule"/>
</dbReference>
<dbReference type="GO" id="GO:0004417">
    <property type="term" value="F:hydroxyethylthiazole kinase activity"/>
    <property type="evidence" value="ECO:0007669"/>
    <property type="project" value="UniProtKB-UniRule"/>
</dbReference>
<dbReference type="GO" id="GO:0000287">
    <property type="term" value="F:magnesium ion binding"/>
    <property type="evidence" value="ECO:0007669"/>
    <property type="project" value="UniProtKB-UniRule"/>
</dbReference>
<dbReference type="GO" id="GO:0009228">
    <property type="term" value="P:thiamine biosynthetic process"/>
    <property type="evidence" value="ECO:0007669"/>
    <property type="project" value="UniProtKB-KW"/>
</dbReference>
<dbReference type="GO" id="GO:0009229">
    <property type="term" value="P:thiamine diphosphate biosynthetic process"/>
    <property type="evidence" value="ECO:0007669"/>
    <property type="project" value="UniProtKB-UniRule"/>
</dbReference>
<dbReference type="CDD" id="cd01170">
    <property type="entry name" value="THZ_kinase"/>
    <property type="match status" value="1"/>
</dbReference>
<dbReference type="Gene3D" id="3.40.1190.20">
    <property type="match status" value="1"/>
</dbReference>
<dbReference type="HAMAP" id="MF_00228">
    <property type="entry name" value="Thz_kinase"/>
    <property type="match status" value="1"/>
</dbReference>
<dbReference type="InterPro" id="IPR000417">
    <property type="entry name" value="Hyethyz_kinase"/>
</dbReference>
<dbReference type="InterPro" id="IPR029056">
    <property type="entry name" value="Ribokinase-like"/>
</dbReference>
<dbReference type="NCBIfam" id="NF006830">
    <property type="entry name" value="PRK09355.1"/>
    <property type="match status" value="1"/>
</dbReference>
<dbReference type="NCBIfam" id="TIGR00694">
    <property type="entry name" value="thiM"/>
    <property type="match status" value="1"/>
</dbReference>
<dbReference type="Pfam" id="PF02110">
    <property type="entry name" value="HK"/>
    <property type="match status" value="1"/>
</dbReference>
<dbReference type="PIRSF" id="PIRSF000513">
    <property type="entry name" value="Thz_kinase"/>
    <property type="match status" value="1"/>
</dbReference>
<dbReference type="PRINTS" id="PR01099">
    <property type="entry name" value="HYETHTZKNASE"/>
</dbReference>
<dbReference type="SUPFAM" id="SSF53613">
    <property type="entry name" value="Ribokinase-like"/>
    <property type="match status" value="1"/>
</dbReference>
<sequence length="256" mass="26959">MYLEQLKEVNPLTICITNNVVKNFTANGLLALGASPAMSECIEDLEDLLKVADALLINIGTLTKESWQLYQEAIKIANKNQVPVVLDPVAAGASRFRLEVSLDLLKNYSISLLTGNGSEIAALIGEKQASKGADGGKVADLESIAVKANQVFDVPVVVTGETDAIAVRGEVRLLQNGSPLMPLVTGTGCLLGAVLAAFIGSSDRSDDLACLTEAMTVYNVAGEIAEKVAKGKGVGSFQVAFLDALSQMKSEMIMDK</sequence>
<evidence type="ECO:0000255" key="1">
    <source>
        <dbReference type="HAMAP-Rule" id="MF_00228"/>
    </source>
</evidence>
<organism>
    <name type="scientific">Streptococcus agalactiae serotype V (strain ATCC BAA-611 / 2603 V/R)</name>
    <dbReference type="NCBI Taxonomy" id="208435"/>
    <lineage>
        <taxon>Bacteria</taxon>
        <taxon>Bacillati</taxon>
        <taxon>Bacillota</taxon>
        <taxon>Bacilli</taxon>
        <taxon>Lactobacillales</taxon>
        <taxon>Streptococcaceae</taxon>
        <taxon>Streptococcus</taxon>
    </lineage>
</organism>
<keyword id="KW-0067">ATP-binding</keyword>
<keyword id="KW-0418">Kinase</keyword>
<keyword id="KW-0460">Magnesium</keyword>
<keyword id="KW-0479">Metal-binding</keyword>
<keyword id="KW-0547">Nucleotide-binding</keyword>
<keyword id="KW-1185">Reference proteome</keyword>
<keyword id="KW-0784">Thiamine biosynthesis</keyword>
<keyword id="KW-0808">Transferase</keyword>
<proteinExistence type="inferred from homology"/>
<accession>Q8E093</accession>
<name>THIM_STRA5</name>
<comment type="function">
    <text evidence="1">Catalyzes the phosphorylation of the hydroxyl group of 4-methyl-5-beta-hydroxyethylthiazole (THZ).</text>
</comment>
<comment type="catalytic activity">
    <reaction evidence="1">
        <text>5-(2-hydroxyethyl)-4-methylthiazole + ATP = 4-methyl-5-(2-phosphooxyethyl)-thiazole + ADP + H(+)</text>
        <dbReference type="Rhea" id="RHEA:24212"/>
        <dbReference type="ChEBI" id="CHEBI:15378"/>
        <dbReference type="ChEBI" id="CHEBI:17957"/>
        <dbReference type="ChEBI" id="CHEBI:30616"/>
        <dbReference type="ChEBI" id="CHEBI:58296"/>
        <dbReference type="ChEBI" id="CHEBI:456216"/>
        <dbReference type="EC" id="2.7.1.50"/>
    </reaction>
</comment>
<comment type="cofactor">
    <cofactor evidence="1">
        <name>Mg(2+)</name>
        <dbReference type="ChEBI" id="CHEBI:18420"/>
    </cofactor>
</comment>
<comment type="pathway">
    <text evidence="1">Cofactor biosynthesis; thiamine diphosphate biosynthesis; 4-methyl-5-(2-phosphoethyl)-thiazole from 5-(2-hydroxyethyl)-4-methylthiazole: step 1/1.</text>
</comment>
<comment type="similarity">
    <text evidence="1">Belongs to the Thz kinase family.</text>
</comment>
<feature type="chain" id="PRO_0000156962" description="Hydroxyethylthiazole kinase">
    <location>
        <begin position="1"/>
        <end position="256"/>
    </location>
</feature>
<feature type="binding site" evidence="1">
    <location>
        <position position="38"/>
    </location>
    <ligand>
        <name>substrate</name>
    </ligand>
</feature>
<feature type="binding site" evidence="1">
    <location>
        <position position="114"/>
    </location>
    <ligand>
        <name>ATP</name>
        <dbReference type="ChEBI" id="CHEBI:30616"/>
    </ligand>
</feature>
<feature type="binding site" evidence="1">
    <location>
        <position position="159"/>
    </location>
    <ligand>
        <name>ATP</name>
        <dbReference type="ChEBI" id="CHEBI:30616"/>
    </ligand>
</feature>
<feature type="binding site" evidence="1">
    <location>
        <position position="186"/>
    </location>
    <ligand>
        <name>substrate</name>
    </ligand>
</feature>